<dbReference type="EC" id="3.6.1.-"/>
<dbReference type="EMBL" id="CP000946">
    <property type="protein sequence ID" value="ACA78100.1"/>
    <property type="molecule type" value="Genomic_DNA"/>
</dbReference>
<dbReference type="RefSeq" id="WP_000476093.1">
    <property type="nucleotide sequence ID" value="NZ_MTFT01000032.1"/>
</dbReference>
<dbReference type="SMR" id="B1IUD3"/>
<dbReference type="GeneID" id="75203720"/>
<dbReference type="KEGG" id="ecl:EcolC_2469"/>
<dbReference type="HOGENOM" id="CLU_037162_6_1_6"/>
<dbReference type="GO" id="GO:0017110">
    <property type="term" value="F:nucleoside diphosphate phosphatase activity"/>
    <property type="evidence" value="ECO:0007669"/>
    <property type="project" value="InterPro"/>
</dbReference>
<dbReference type="GO" id="GO:0017111">
    <property type="term" value="F:ribonucleoside triphosphate phosphatase activity"/>
    <property type="evidence" value="ECO:0007669"/>
    <property type="project" value="InterPro"/>
</dbReference>
<dbReference type="GO" id="GO:0004787">
    <property type="term" value="F:thiamine diphosphate phosphatase activity"/>
    <property type="evidence" value="ECO:0007669"/>
    <property type="project" value="InterPro"/>
</dbReference>
<dbReference type="CDD" id="cd03675">
    <property type="entry name" value="NUDIX_Hydrolase"/>
    <property type="match status" value="1"/>
</dbReference>
<dbReference type="FunFam" id="3.90.79.10:FF:000017">
    <property type="entry name" value="Phosphatase NudJ"/>
    <property type="match status" value="1"/>
</dbReference>
<dbReference type="Gene3D" id="3.90.79.10">
    <property type="entry name" value="Nucleoside Triphosphate Pyrophosphohydrolase"/>
    <property type="match status" value="1"/>
</dbReference>
<dbReference type="InterPro" id="IPR020476">
    <property type="entry name" value="Nudix_hydrolase"/>
</dbReference>
<dbReference type="InterPro" id="IPR015797">
    <property type="entry name" value="NUDIX_hydrolase-like_dom_sf"/>
</dbReference>
<dbReference type="InterPro" id="IPR020084">
    <property type="entry name" value="NUDIX_hydrolase_CS"/>
</dbReference>
<dbReference type="InterPro" id="IPR000086">
    <property type="entry name" value="NUDIX_hydrolase_dom"/>
</dbReference>
<dbReference type="InterPro" id="IPR033713">
    <property type="entry name" value="NudJ"/>
</dbReference>
<dbReference type="PANTHER" id="PTHR43222">
    <property type="entry name" value="NUDIX HYDROLASE 23"/>
    <property type="match status" value="1"/>
</dbReference>
<dbReference type="PANTHER" id="PTHR43222:SF11">
    <property type="entry name" value="PHOSPHATASE NUDJ"/>
    <property type="match status" value="1"/>
</dbReference>
<dbReference type="Pfam" id="PF00293">
    <property type="entry name" value="NUDIX"/>
    <property type="match status" value="1"/>
</dbReference>
<dbReference type="PRINTS" id="PR00502">
    <property type="entry name" value="NUDIXFAMILY"/>
</dbReference>
<dbReference type="SUPFAM" id="SSF55811">
    <property type="entry name" value="Nudix"/>
    <property type="match status" value="1"/>
</dbReference>
<dbReference type="PROSITE" id="PS51462">
    <property type="entry name" value="NUDIX"/>
    <property type="match status" value="1"/>
</dbReference>
<dbReference type="PROSITE" id="PS00893">
    <property type="entry name" value="NUDIX_BOX"/>
    <property type="match status" value="1"/>
</dbReference>
<reference key="1">
    <citation type="submission" date="2008-02" db="EMBL/GenBank/DDBJ databases">
        <title>Complete sequence of Escherichia coli C str. ATCC 8739.</title>
        <authorList>
            <person name="Copeland A."/>
            <person name="Lucas S."/>
            <person name="Lapidus A."/>
            <person name="Glavina del Rio T."/>
            <person name="Dalin E."/>
            <person name="Tice H."/>
            <person name="Bruce D."/>
            <person name="Goodwin L."/>
            <person name="Pitluck S."/>
            <person name="Kiss H."/>
            <person name="Brettin T."/>
            <person name="Detter J.C."/>
            <person name="Han C."/>
            <person name="Kuske C.R."/>
            <person name="Schmutz J."/>
            <person name="Larimer F."/>
            <person name="Land M."/>
            <person name="Hauser L."/>
            <person name="Kyrpides N."/>
            <person name="Mikhailova N."/>
            <person name="Ingram L."/>
            <person name="Richardson P."/>
        </authorList>
    </citation>
    <scope>NUCLEOTIDE SEQUENCE [LARGE SCALE GENOMIC DNA]</scope>
    <source>
        <strain>ATCC 8739 / DSM 1576 / NBRC 3972 / NCIMB 8545 / WDCM 00012 / Crooks</strain>
    </source>
</reference>
<gene>
    <name type="primary">nudJ</name>
    <name type="ordered locus">EcolC_2469</name>
</gene>
<sequence length="153" mass="17433">MFKPHVTVACVVHAEGKFLVVEETINGKALWNQPAGHLEADETLVEAAARELWEETGISAQPQHFIRMHQWIAPDKTPFLRFLFAIELEQICPTQPHDSDIDCCRWVSAEEILQASNLRSPLVAESIRCYQSGQRYPLEMIGDFNWPFTKGVI</sequence>
<proteinExistence type="inferred from homology"/>
<protein>
    <recommendedName>
        <fullName>Phosphatase NudJ</fullName>
        <ecNumber>3.6.1.-</ecNumber>
    </recommendedName>
</protein>
<name>NUDJ_ECOLC</name>
<accession>B1IUD3</accession>
<evidence type="ECO:0000250" key="1"/>
<evidence type="ECO:0000255" key="2">
    <source>
        <dbReference type="PROSITE-ProRule" id="PRU00794"/>
    </source>
</evidence>
<evidence type="ECO:0000305" key="3"/>
<keyword id="KW-0378">Hydrolase</keyword>
<keyword id="KW-0460">Magnesium</keyword>
<organism>
    <name type="scientific">Escherichia coli (strain ATCC 8739 / DSM 1576 / NBRC 3972 / NCIMB 8545 / WDCM 00012 / Crooks)</name>
    <dbReference type="NCBI Taxonomy" id="481805"/>
    <lineage>
        <taxon>Bacteria</taxon>
        <taxon>Pseudomonadati</taxon>
        <taxon>Pseudomonadota</taxon>
        <taxon>Gammaproteobacteria</taxon>
        <taxon>Enterobacterales</taxon>
        <taxon>Enterobacteriaceae</taxon>
        <taxon>Escherichia</taxon>
    </lineage>
</organism>
<comment type="cofactor">
    <cofactor evidence="1">
        <name>Mg(2+)</name>
        <dbReference type="ChEBI" id="CHEBI:18420"/>
    </cofactor>
</comment>
<comment type="subunit">
    <text evidence="1">Monomer.</text>
</comment>
<comment type="similarity">
    <text evidence="3">Belongs to the Nudix hydrolase family. NudJ subfamily.</text>
</comment>
<feature type="chain" id="PRO_0000342637" description="Phosphatase NudJ">
    <location>
        <begin position="1"/>
        <end position="153"/>
    </location>
</feature>
<feature type="domain" description="Nudix hydrolase" evidence="2">
    <location>
        <begin position="3"/>
        <end position="131"/>
    </location>
</feature>
<feature type="short sequence motif" description="Nudix box">
    <location>
        <begin position="36"/>
        <end position="57"/>
    </location>
</feature>